<name>CILA_ECOLI</name>
<gene>
    <name type="primary">citF</name>
    <name type="synonym">ybdV</name>
    <name type="ordered locus">b0615</name>
    <name type="ordered locus">JW5087</name>
</gene>
<feature type="chain" id="PRO_0000089752" description="Citrate lyase alpha chain">
    <location>
        <begin position="1"/>
        <end position="510"/>
    </location>
</feature>
<evidence type="ECO:0000250" key="1"/>
<evidence type="ECO:0000269" key="2">
    <source>
    </source>
</evidence>
<evidence type="ECO:0000305" key="3"/>
<dbReference type="EC" id="4.1.3.6"/>
<dbReference type="EC" id="2.8.3.10"/>
<dbReference type="EMBL" id="U82598">
    <property type="protein sequence ID" value="AAB40815.1"/>
    <property type="status" value="ALT_INIT"/>
    <property type="molecule type" value="Genomic_DNA"/>
</dbReference>
<dbReference type="EMBL" id="U00096">
    <property type="protein sequence ID" value="AAC73716.1"/>
    <property type="molecule type" value="Genomic_DNA"/>
</dbReference>
<dbReference type="EMBL" id="AP009048">
    <property type="protein sequence ID" value="BAA35251.2"/>
    <property type="molecule type" value="Genomic_DNA"/>
</dbReference>
<dbReference type="PIR" id="E64795">
    <property type="entry name" value="E64795"/>
</dbReference>
<dbReference type="RefSeq" id="NP_415148.1">
    <property type="nucleotide sequence ID" value="NC_000913.3"/>
</dbReference>
<dbReference type="RefSeq" id="WP_000192242.1">
    <property type="nucleotide sequence ID" value="NZ_LN832404.1"/>
</dbReference>
<dbReference type="SMR" id="P75726"/>
<dbReference type="BioGRID" id="4261998">
    <property type="interactions" value="22"/>
</dbReference>
<dbReference type="ComplexPortal" id="CPX-4781">
    <property type="entry name" value="Citrate lyase complex"/>
</dbReference>
<dbReference type="FunCoup" id="P75726">
    <property type="interactions" value="209"/>
</dbReference>
<dbReference type="STRING" id="511145.b0615"/>
<dbReference type="PaxDb" id="511145-b0615"/>
<dbReference type="EnsemblBacteria" id="AAC73716">
    <property type="protein sequence ID" value="AAC73716"/>
    <property type="gene ID" value="b0615"/>
</dbReference>
<dbReference type="GeneID" id="945230"/>
<dbReference type="KEGG" id="ecj:JW5087"/>
<dbReference type="KEGG" id="eco:b0615"/>
<dbReference type="KEGG" id="ecoc:C3026_03075"/>
<dbReference type="PATRIC" id="fig|1411691.4.peg.1653"/>
<dbReference type="EchoBASE" id="EB3311"/>
<dbReference type="eggNOG" id="COG3051">
    <property type="taxonomic scope" value="Bacteria"/>
</dbReference>
<dbReference type="HOGENOM" id="CLU_046521_2_0_6"/>
<dbReference type="InParanoid" id="P75726"/>
<dbReference type="OMA" id="EVSANQY"/>
<dbReference type="OrthoDB" id="9767643at2"/>
<dbReference type="PhylomeDB" id="P75726"/>
<dbReference type="BioCyc" id="EcoCyc:CITTRANS-MONOMER"/>
<dbReference type="BioCyc" id="MetaCyc:CITTRANS-MONOMER"/>
<dbReference type="PRO" id="PR:P75726"/>
<dbReference type="Proteomes" id="UP000000625">
    <property type="component" value="Chromosome"/>
</dbReference>
<dbReference type="GO" id="GO:0009346">
    <property type="term" value="C:ATP-independent citrate lyase complex"/>
    <property type="evidence" value="ECO:0000353"/>
    <property type="project" value="ComplexPortal"/>
</dbReference>
<dbReference type="GO" id="GO:0005737">
    <property type="term" value="C:cytoplasm"/>
    <property type="evidence" value="ECO:0007669"/>
    <property type="project" value="UniProtKB-SubCell"/>
</dbReference>
<dbReference type="GO" id="GO:0008815">
    <property type="term" value="F:citrate (pro-3S)-lyase activity"/>
    <property type="evidence" value="ECO:0007669"/>
    <property type="project" value="UniProtKB-EC"/>
</dbReference>
<dbReference type="GO" id="GO:0008814">
    <property type="term" value="F:citrate CoA-transferase activity"/>
    <property type="evidence" value="ECO:0007669"/>
    <property type="project" value="UniProtKB-EC"/>
</dbReference>
<dbReference type="GO" id="GO:0006084">
    <property type="term" value="P:acetyl-CoA metabolic process"/>
    <property type="evidence" value="ECO:0000314"/>
    <property type="project" value="ComplexPortal"/>
</dbReference>
<dbReference type="GO" id="GO:0006101">
    <property type="term" value="P:citrate metabolic process"/>
    <property type="evidence" value="ECO:0000314"/>
    <property type="project" value="ComplexPortal"/>
</dbReference>
<dbReference type="Gene3D" id="3.40.1080.10">
    <property type="entry name" value="Glutaconate Coenzyme A-transferase"/>
    <property type="match status" value="2"/>
</dbReference>
<dbReference type="InterPro" id="IPR006472">
    <property type="entry name" value="Citrate_lyase_asu"/>
</dbReference>
<dbReference type="InterPro" id="IPR037171">
    <property type="entry name" value="NagB/RpiA_transferase-like"/>
</dbReference>
<dbReference type="NCBIfam" id="TIGR01584">
    <property type="entry name" value="citF"/>
    <property type="match status" value="1"/>
</dbReference>
<dbReference type="PANTHER" id="PTHR40596">
    <property type="entry name" value="CITRATE LYASE ALPHA CHAIN"/>
    <property type="match status" value="1"/>
</dbReference>
<dbReference type="PANTHER" id="PTHR40596:SF1">
    <property type="entry name" value="CITRATE LYASE ALPHA CHAIN"/>
    <property type="match status" value="1"/>
</dbReference>
<dbReference type="Pfam" id="PF04223">
    <property type="entry name" value="CitF"/>
    <property type="match status" value="1"/>
</dbReference>
<dbReference type="PIRSF" id="PIRSF009451">
    <property type="entry name" value="Citrt_lyas_alpha"/>
    <property type="match status" value="1"/>
</dbReference>
<dbReference type="SUPFAM" id="SSF100950">
    <property type="entry name" value="NagB/RpiA/CoA transferase-like"/>
    <property type="match status" value="2"/>
</dbReference>
<comment type="function">
    <text evidence="1">Represents a citrate:acetyl-ACP transferase.</text>
</comment>
<comment type="catalytic activity">
    <reaction>
        <text>citrate = oxaloacetate + acetate</text>
        <dbReference type="Rhea" id="RHEA:10760"/>
        <dbReference type="ChEBI" id="CHEBI:16452"/>
        <dbReference type="ChEBI" id="CHEBI:16947"/>
        <dbReference type="ChEBI" id="CHEBI:30089"/>
        <dbReference type="EC" id="4.1.3.6"/>
    </reaction>
</comment>
<comment type="catalytic activity">
    <reaction>
        <text>citrate + acetyl-CoA = (3S)-citryl-CoA + acetate</text>
        <dbReference type="Rhea" id="RHEA:19405"/>
        <dbReference type="ChEBI" id="CHEBI:16947"/>
        <dbReference type="ChEBI" id="CHEBI:30089"/>
        <dbReference type="ChEBI" id="CHEBI:57288"/>
        <dbReference type="ChEBI" id="CHEBI:57321"/>
        <dbReference type="EC" id="2.8.3.10"/>
    </reaction>
</comment>
<comment type="subunit">
    <text evidence="1">Oligomer with a subunit composition of (alpha,beta,gamma)6.</text>
</comment>
<comment type="subcellular location">
    <subcellularLocation>
        <location>Cytoplasm</location>
    </subcellularLocation>
</comment>
<comment type="induction">
    <text evidence="2">Repressed by H-NS. Part of the citCDEFXG operon.</text>
</comment>
<comment type="sequence caution" evidence="3">
    <conflict type="erroneous initiation">
        <sequence resource="EMBL-CDS" id="AAB40815"/>
    </conflict>
</comment>
<reference key="1">
    <citation type="journal article" date="1996" name="DNA Res.">
        <title>A 718-kb DNA sequence of the Escherichia coli K-12 genome corresponding to the 12.7-28.0 min region on the linkage map.</title>
        <authorList>
            <person name="Oshima T."/>
            <person name="Aiba H."/>
            <person name="Baba T."/>
            <person name="Fujita K."/>
            <person name="Hayashi K."/>
            <person name="Honjo A."/>
            <person name="Ikemoto K."/>
            <person name="Inada T."/>
            <person name="Itoh T."/>
            <person name="Kajihara M."/>
            <person name="Kanai K."/>
            <person name="Kashimoto K."/>
            <person name="Kimura S."/>
            <person name="Kitagawa M."/>
            <person name="Makino K."/>
            <person name="Masuda S."/>
            <person name="Miki T."/>
            <person name="Mizobuchi K."/>
            <person name="Mori H."/>
            <person name="Motomura K."/>
            <person name="Nakamura Y."/>
            <person name="Nashimoto H."/>
            <person name="Nishio Y."/>
            <person name="Saito N."/>
            <person name="Sampei G."/>
            <person name="Seki Y."/>
            <person name="Tagami H."/>
            <person name="Takemoto K."/>
            <person name="Wada C."/>
            <person name="Yamamoto Y."/>
            <person name="Yano M."/>
            <person name="Horiuchi T."/>
        </authorList>
    </citation>
    <scope>NUCLEOTIDE SEQUENCE [LARGE SCALE GENOMIC DNA]</scope>
    <source>
        <strain>K12 / W3110 / ATCC 27325 / DSM 5911</strain>
    </source>
</reference>
<reference key="2">
    <citation type="submission" date="1997-01" db="EMBL/GenBank/DDBJ databases">
        <title>Sequence of minutes 4-25 of Escherichia coli.</title>
        <authorList>
            <person name="Chung E."/>
            <person name="Allen E."/>
            <person name="Araujo R."/>
            <person name="Aparicio A.M."/>
            <person name="Davis K."/>
            <person name="Duncan M."/>
            <person name="Federspiel N."/>
            <person name="Hyman R."/>
            <person name="Kalman S."/>
            <person name="Komp C."/>
            <person name="Kurdi O."/>
            <person name="Lew H."/>
            <person name="Lin D."/>
            <person name="Namath A."/>
            <person name="Oefner P."/>
            <person name="Roberts D."/>
            <person name="Schramm S."/>
            <person name="Davis R.W."/>
        </authorList>
    </citation>
    <scope>NUCLEOTIDE SEQUENCE [LARGE SCALE GENOMIC DNA]</scope>
    <source>
        <strain>K12 / MG1655 / ATCC 47076</strain>
    </source>
</reference>
<reference key="3">
    <citation type="journal article" date="1997" name="Science">
        <title>The complete genome sequence of Escherichia coli K-12.</title>
        <authorList>
            <person name="Blattner F.R."/>
            <person name="Plunkett G. III"/>
            <person name="Bloch C.A."/>
            <person name="Perna N.T."/>
            <person name="Burland V."/>
            <person name="Riley M."/>
            <person name="Collado-Vides J."/>
            <person name="Glasner J.D."/>
            <person name="Rode C.K."/>
            <person name="Mayhew G.F."/>
            <person name="Gregor J."/>
            <person name="Davis N.W."/>
            <person name="Kirkpatrick H.A."/>
            <person name="Goeden M.A."/>
            <person name="Rose D.J."/>
            <person name="Mau B."/>
            <person name="Shao Y."/>
        </authorList>
    </citation>
    <scope>NUCLEOTIDE SEQUENCE [LARGE SCALE GENOMIC DNA]</scope>
    <source>
        <strain>K12 / MG1655 / ATCC 47076</strain>
    </source>
</reference>
<reference key="4">
    <citation type="journal article" date="2006" name="Mol. Syst. Biol.">
        <title>Highly accurate genome sequences of Escherichia coli K-12 strains MG1655 and W3110.</title>
        <authorList>
            <person name="Hayashi K."/>
            <person name="Morooka N."/>
            <person name="Yamamoto Y."/>
            <person name="Fujita K."/>
            <person name="Isono K."/>
            <person name="Choi S."/>
            <person name="Ohtsubo E."/>
            <person name="Baba T."/>
            <person name="Wanner B.L."/>
            <person name="Mori H."/>
            <person name="Horiuchi T."/>
        </authorList>
    </citation>
    <scope>NUCLEOTIDE SEQUENCE [LARGE SCALE GENOMIC DNA]</scope>
    <source>
        <strain>K12 / W3110 / ATCC 27325 / DSM 5911</strain>
    </source>
</reference>
<reference key="5">
    <citation type="journal article" date="2009" name="J. Bacteriol.">
        <title>Involvement of the leucine response transcription factor LeuO in regulation of the genes for sulfa drug efflux.</title>
        <authorList>
            <person name="Shimada T."/>
            <person name="Yamamoto K."/>
            <person name="Ishihama A."/>
        </authorList>
    </citation>
    <scope>OPERON STRUCTURE</scope>
    <scope>INDUCTION</scope>
    <source>
        <strain>K12 / BW25113</strain>
    </source>
</reference>
<accession>P75726</accession>
<accession>P77102</accession>
<accession>Q9R7T5</accession>
<accession>Q9R7T6</accession>
<keyword id="KW-0963">Cytoplasm</keyword>
<keyword id="KW-0456">Lyase</keyword>
<keyword id="KW-1185">Reference proteome</keyword>
<keyword id="KW-0808">Transferase</keyword>
<proteinExistence type="evidence at transcript level"/>
<organism>
    <name type="scientific">Escherichia coli (strain K12)</name>
    <dbReference type="NCBI Taxonomy" id="83333"/>
    <lineage>
        <taxon>Bacteria</taxon>
        <taxon>Pseudomonadati</taxon>
        <taxon>Pseudomonadota</taxon>
        <taxon>Gammaproteobacteria</taxon>
        <taxon>Enterobacterales</taxon>
        <taxon>Enterobacteriaceae</taxon>
        <taxon>Escherichia</taxon>
    </lineage>
</organism>
<protein>
    <recommendedName>
        <fullName>Citrate lyase alpha chain</fullName>
        <shortName>Citrase alpha chain</shortName>
        <ecNumber>4.1.3.6</ecNumber>
    </recommendedName>
    <alternativeName>
        <fullName>Citrate (pro-3S)-lyase alpha chain</fullName>
    </alternativeName>
    <alternativeName>
        <fullName>Citrate CoA-transferase subunit</fullName>
        <ecNumber>2.8.3.10</ecNumber>
    </alternativeName>
</protein>
<sequence>MTQKIEQSQRQERVAAWNRRAECDLAAFQNSPKQTYQAEKARDRKLCANLEEAIRRSGLQDGMTVSFHHAFRGGDLTVNMVMDVIAKMGFKNLTLASSSLSDCHAPLVEHIRQGVVTRIYTSGLRGPLAEEISRGLLAEPVQIHSHGGRVHLVQSGELNIDVAFLGVPSCDEFGNANGYTGKACCGSLGYAIVDADNAKQVVMLTEELLPYPHNPASIEQDQVDLIVKVDRVGDAAKIGAGATRMTTNPRELLIARSAADVIVNSGYFKEGFSMQTGTGGASLAVTRFLEDKMRSRDIRADFALGGITATMVDLHEKGLIRKLLDVQSFDSHAAQSLARNPNHIEISANQYANWGSKGASVDRLDVVVLSALEIDTQFNVNVLTGSDGVLRGASGGHCDTAIASALSIIVAPLVRGRIPTLVDNVLTCITPGSSVDILVTDHGIAVNPARPELAERLQEAGIKVVSIEWLRERARLLTGEPQPIEFTDRVVAVVRYRDGSVIDVVHQVKE</sequence>